<evidence type="ECO:0000255" key="1">
    <source>
        <dbReference type="HAMAP-Rule" id="MF_00064"/>
    </source>
</evidence>
<keyword id="KW-0067">ATP-binding</keyword>
<keyword id="KW-0547">Nucleotide-binding</keyword>
<keyword id="KW-0548">Nucleotidyltransferase</keyword>
<keyword id="KW-1185">Reference proteome</keyword>
<keyword id="KW-0808">Transferase</keyword>
<organism>
    <name type="scientific">Xylella fastidiosa (strain Temecula1 / ATCC 700964)</name>
    <dbReference type="NCBI Taxonomy" id="183190"/>
    <lineage>
        <taxon>Bacteria</taxon>
        <taxon>Pseudomonadati</taxon>
        <taxon>Pseudomonadota</taxon>
        <taxon>Gammaproteobacteria</taxon>
        <taxon>Lysobacterales</taxon>
        <taxon>Lysobacteraceae</taxon>
        <taxon>Xylella</taxon>
    </lineage>
</organism>
<feature type="chain" id="PRO_0000100682" description="Sulfate adenylyltransferase subunit 2">
    <location>
        <begin position="1"/>
        <end position="304"/>
    </location>
</feature>
<reference key="1">
    <citation type="journal article" date="2003" name="J. Bacteriol.">
        <title>Comparative analyses of the complete genome sequences of Pierce's disease and citrus variegated chlorosis strains of Xylella fastidiosa.</title>
        <authorList>
            <person name="Van Sluys M.A."/>
            <person name="de Oliveira M.C."/>
            <person name="Monteiro-Vitorello C.B."/>
            <person name="Miyaki C.Y."/>
            <person name="Furlan L.R."/>
            <person name="Camargo L.E.A."/>
            <person name="da Silva A.C.R."/>
            <person name="Moon D.H."/>
            <person name="Takita M.A."/>
            <person name="Lemos E.G.M."/>
            <person name="Machado M.A."/>
            <person name="Ferro M.I.T."/>
            <person name="da Silva F.R."/>
            <person name="Goldman M.H.S."/>
            <person name="Goldman G.H."/>
            <person name="Lemos M.V.F."/>
            <person name="El-Dorry H."/>
            <person name="Tsai S.M."/>
            <person name="Carrer H."/>
            <person name="Carraro D.M."/>
            <person name="de Oliveira R.C."/>
            <person name="Nunes L.R."/>
            <person name="Siqueira W.J."/>
            <person name="Coutinho L.L."/>
            <person name="Kimura E.T."/>
            <person name="Ferro E.S."/>
            <person name="Harakava R."/>
            <person name="Kuramae E.E."/>
            <person name="Marino C.L."/>
            <person name="Giglioti E."/>
            <person name="Abreu I.L."/>
            <person name="Alves L.M.C."/>
            <person name="do Amaral A.M."/>
            <person name="Baia G.S."/>
            <person name="Blanco S.R."/>
            <person name="Brito M.S."/>
            <person name="Cannavan F.S."/>
            <person name="Celestino A.V."/>
            <person name="da Cunha A.F."/>
            <person name="Fenille R.C."/>
            <person name="Ferro J.A."/>
            <person name="Formighieri E.F."/>
            <person name="Kishi L.T."/>
            <person name="Leoni S.G."/>
            <person name="Oliveira A.R."/>
            <person name="Rosa V.E. Jr."/>
            <person name="Sassaki F.T."/>
            <person name="Sena J.A.D."/>
            <person name="de Souza A.A."/>
            <person name="Truffi D."/>
            <person name="Tsukumo F."/>
            <person name="Yanai G.M."/>
            <person name="Zaros L.G."/>
            <person name="Civerolo E.L."/>
            <person name="Simpson A.J.G."/>
            <person name="Almeida N.F. Jr."/>
            <person name="Setubal J.C."/>
            <person name="Kitajima J.P."/>
        </authorList>
    </citation>
    <scope>NUCLEOTIDE SEQUENCE [LARGE SCALE GENOMIC DNA]</scope>
    <source>
        <strain>Temecula1 / ATCC 700964</strain>
    </source>
</reference>
<proteinExistence type="inferred from homology"/>
<gene>
    <name evidence="1" type="primary">cysD</name>
    <name type="ordered locus">PD_0717</name>
</gene>
<sequence>MDSSSFSFSHLDRLEAESIYILREVVAEFRNPVLLYSVGKDSSVLLHLLLKAFAPAPPPIPLLHVDTRWKFREMIAFRDRRVAETGVQLRVHINLEGVAQEINPITHGAAVHTDIMKTQGLRQALEQGQFDAAIGGARRDEEKSRAKERVFSFRNAHHRWDPKNQRPELWNVYNARIHPGESVRVFPLSNWTELDVWLYIYREQIPVVSLYFAAPRPVVERDGMLILVDDERLPLHPGEVSKLRWVRFRTLGCYPLTGAVESRAATLEDIIAEMLVTPFSERQGRLIDYAPGASMESKKIEGYF</sequence>
<name>CYSD_XYLFT</name>
<comment type="function">
    <text evidence="1">With CysN forms the ATP sulfurylase (ATPS) that catalyzes the adenylation of sulfate producing adenosine 5'-phosphosulfate (APS) and diphosphate, the first enzymatic step in sulfur assimilation pathway. APS synthesis involves the formation of a high-energy phosphoric-sulfuric acid anhydride bond driven by GTP hydrolysis by CysN coupled to ATP hydrolysis by CysD.</text>
</comment>
<comment type="catalytic activity">
    <reaction evidence="1">
        <text>sulfate + ATP + H(+) = adenosine 5'-phosphosulfate + diphosphate</text>
        <dbReference type="Rhea" id="RHEA:18133"/>
        <dbReference type="ChEBI" id="CHEBI:15378"/>
        <dbReference type="ChEBI" id="CHEBI:16189"/>
        <dbReference type="ChEBI" id="CHEBI:30616"/>
        <dbReference type="ChEBI" id="CHEBI:33019"/>
        <dbReference type="ChEBI" id="CHEBI:58243"/>
        <dbReference type="EC" id="2.7.7.4"/>
    </reaction>
</comment>
<comment type="pathway">
    <text evidence="1">Sulfur metabolism; hydrogen sulfide biosynthesis; sulfite from sulfate: step 1/3.</text>
</comment>
<comment type="subunit">
    <text evidence="1">Heterodimer composed of CysD, the smaller subunit, and CysNC.</text>
</comment>
<comment type="similarity">
    <text evidence="1">Belongs to the PAPS reductase family. CysD subfamily.</text>
</comment>
<protein>
    <recommendedName>
        <fullName evidence="1">Sulfate adenylyltransferase subunit 2</fullName>
        <ecNumber evidence="1">2.7.7.4</ecNumber>
    </recommendedName>
    <alternativeName>
        <fullName evidence="1">ATP-sulfurylase small subunit</fullName>
    </alternativeName>
    <alternativeName>
        <fullName evidence="1">Sulfate adenylate transferase</fullName>
        <shortName evidence="1">SAT</shortName>
    </alternativeName>
</protein>
<dbReference type="EC" id="2.7.7.4" evidence="1"/>
<dbReference type="EMBL" id="AE009442">
    <property type="protein sequence ID" value="AAO28586.1"/>
    <property type="molecule type" value="Genomic_DNA"/>
</dbReference>
<dbReference type="RefSeq" id="WP_011097755.1">
    <property type="nucleotide sequence ID" value="NC_004556.1"/>
</dbReference>
<dbReference type="SMR" id="Q87DG8"/>
<dbReference type="GeneID" id="93904497"/>
<dbReference type="KEGG" id="xft:PD_0717"/>
<dbReference type="HOGENOM" id="CLU_043026_0_0_6"/>
<dbReference type="UniPathway" id="UPA00140">
    <property type="reaction ID" value="UER00204"/>
</dbReference>
<dbReference type="Proteomes" id="UP000002516">
    <property type="component" value="Chromosome"/>
</dbReference>
<dbReference type="GO" id="GO:0005524">
    <property type="term" value="F:ATP binding"/>
    <property type="evidence" value="ECO:0007669"/>
    <property type="project" value="UniProtKB-KW"/>
</dbReference>
<dbReference type="GO" id="GO:0004781">
    <property type="term" value="F:sulfate adenylyltransferase (ATP) activity"/>
    <property type="evidence" value="ECO:0007669"/>
    <property type="project" value="UniProtKB-UniRule"/>
</dbReference>
<dbReference type="GO" id="GO:0070814">
    <property type="term" value="P:hydrogen sulfide biosynthetic process"/>
    <property type="evidence" value="ECO:0007669"/>
    <property type="project" value="UniProtKB-UniRule"/>
</dbReference>
<dbReference type="GO" id="GO:0000103">
    <property type="term" value="P:sulfate assimilation"/>
    <property type="evidence" value="ECO:0007669"/>
    <property type="project" value="UniProtKB-UniRule"/>
</dbReference>
<dbReference type="FunFam" id="3.40.50.620:FF:000002">
    <property type="entry name" value="Sulfate adenylyltransferase subunit 2"/>
    <property type="match status" value="1"/>
</dbReference>
<dbReference type="Gene3D" id="3.40.50.620">
    <property type="entry name" value="HUPs"/>
    <property type="match status" value="1"/>
</dbReference>
<dbReference type="HAMAP" id="MF_00064">
    <property type="entry name" value="Sulf_adenylyltr_sub2"/>
    <property type="match status" value="1"/>
</dbReference>
<dbReference type="InterPro" id="IPR002500">
    <property type="entry name" value="PAPS_reduct_dom"/>
</dbReference>
<dbReference type="InterPro" id="IPR014729">
    <property type="entry name" value="Rossmann-like_a/b/a_fold"/>
</dbReference>
<dbReference type="InterPro" id="IPR011784">
    <property type="entry name" value="SO4_adenylTrfase_ssu"/>
</dbReference>
<dbReference type="InterPro" id="IPR050128">
    <property type="entry name" value="Sulfate_adenylyltrnsfr_sub2"/>
</dbReference>
<dbReference type="NCBIfam" id="TIGR02039">
    <property type="entry name" value="CysD"/>
    <property type="match status" value="1"/>
</dbReference>
<dbReference type="NCBIfam" id="NF003587">
    <property type="entry name" value="PRK05253.1"/>
    <property type="match status" value="1"/>
</dbReference>
<dbReference type="NCBIfam" id="NF009214">
    <property type="entry name" value="PRK12563.1"/>
    <property type="match status" value="1"/>
</dbReference>
<dbReference type="PANTHER" id="PTHR43196">
    <property type="entry name" value="SULFATE ADENYLYLTRANSFERASE SUBUNIT 2"/>
    <property type="match status" value="1"/>
</dbReference>
<dbReference type="PANTHER" id="PTHR43196:SF1">
    <property type="entry name" value="SULFATE ADENYLYLTRANSFERASE SUBUNIT 2"/>
    <property type="match status" value="1"/>
</dbReference>
<dbReference type="Pfam" id="PF01507">
    <property type="entry name" value="PAPS_reduct"/>
    <property type="match status" value="1"/>
</dbReference>
<dbReference type="PIRSF" id="PIRSF002936">
    <property type="entry name" value="CysDAde_trans"/>
    <property type="match status" value="1"/>
</dbReference>
<dbReference type="SUPFAM" id="SSF52402">
    <property type="entry name" value="Adenine nucleotide alpha hydrolases-like"/>
    <property type="match status" value="1"/>
</dbReference>
<accession>Q87DG8</accession>